<evidence type="ECO:0000255" key="1">
    <source>
        <dbReference type="PROSITE-ProRule" id="PRU00441"/>
    </source>
</evidence>
<evidence type="ECO:0000305" key="2"/>
<reference key="1">
    <citation type="journal article" date="1998" name="DNA Res.">
        <title>Complete sequence and gene organization of the genome of a hyper-thermophilic archaebacterium, Pyrococcus horikoshii OT3.</title>
        <authorList>
            <person name="Kawarabayasi Y."/>
            <person name="Sawada M."/>
            <person name="Horikawa H."/>
            <person name="Haikawa Y."/>
            <person name="Hino Y."/>
            <person name="Yamamoto S."/>
            <person name="Sekine M."/>
            <person name="Baba S."/>
            <person name="Kosugi H."/>
            <person name="Hosoyama A."/>
            <person name="Nagai Y."/>
            <person name="Sakai M."/>
            <person name="Ogura K."/>
            <person name="Otsuka R."/>
            <person name="Nakazawa H."/>
            <person name="Takamiya M."/>
            <person name="Ohfuku Y."/>
            <person name="Funahashi T."/>
            <person name="Tanaka T."/>
            <person name="Kudoh Y."/>
            <person name="Yamazaki J."/>
            <person name="Kushida N."/>
            <person name="Oguchi A."/>
            <person name="Aoki K."/>
            <person name="Yoshizawa T."/>
            <person name="Nakamura Y."/>
            <person name="Robb F.T."/>
            <person name="Horikoshi K."/>
            <person name="Masuchi Y."/>
            <person name="Shizuya H."/>
            <person name="Kikuchi H."/>
        </authorList>
    </citation>
    <scope>NUCLEOTIDE SEQUENCE [LARGE SCALE GENOMIC DNA]</scope>
    <source>
        <strain>ATCC 700860 / DSM 12428 / JCM 9974 / NBRC 100139 / OT-3</strain>
    </source>
</reference>
<feature type="chain" id="PRO_0000060310" description="Probable ABC transporter permease protein PH1036">
    <location>
        <begin position="1"/>
        <end position="276"/>
    </location>
</feature>
<feature type="transmembrane region" description="Helical" evidence="1">
    <location>
        <begin position="12"/>
        <end position="32"/>
    </location>
</feature>
<feature type="transmembrane region" description="Helical" evidence="1">
    <location>
        <begin position="75"/>
        <end position="95"/>
    </location>
</feature>
<feature type="transmembrane region" description="Helical" evidence="1">
    <location>
        <begin position="109"/>
        <end position="129"/>
    </location>
</feature>
<feature type="transmembrane region" description="Helical" evidence="1">
    <location>
        <begin position="137"/>
        <end position="157"/>
    </location>
</feature>
<feature type="transmembrane region" description="Helical" evidence="1">
    <location>
        <begin position="186"/>
        <end position="206"/>
    </location>
</feature>
<feature type="transmembrane region" description="Helical" evidence="1">
    <location>
        <begin position="241"/>
        <end position="261"/>
    </location>
</feature>
<feature type="domain" description="ABC transmembrane type-1" evidence="1">
    <location>
        <begin position="70"/>
        <end position="261"/>
    </location>
</feature>
<keyword id="KW-1003">Cell membrane</keyword>
<keyword id="KW-0472">Membrane</keyword>
<keyword id="KW-0812">Transmembrane</keyword>
<keyword id="KW-1133">Transmembrane helix</keyword>
<keyword id="KW-0813">Transport</keyword>
<organism>
    <name type="scientific">Pyrococcus horikoshii (strain ATCC 700860 / DSM 12428 / JCM 9974 / NBRC 100139 / OT-3)</name>
    <dbReference type="NCBI Taxonomy" id="70601"/>
    <lineage>
        <taxon>Archaea</taxon>
        <taxon>Methanobacteriati</taxon>
        <taxon>Methanobacteriota</taxon>
        <taxon>Thermococci</taxon>
        <taxon>Thermococcales</taxon>
        <taxon>Thermococcaceae</taxon>
        <taxon>Pyrococcus</taxon>
    </lineage>
</organism>
<gene>
    <name type="ordered locus">PH1036</name>
    <name type="ORF">PHAJ016</name>
</gene>
<comment type="function">
    <text>Probably part of a binding-protein-dependent transport system PH1036/38/39. Probably responsible for the translocation of the substrate across the membrane.</text>
</comment>
<comment type="subcellular location">
    <subcellularLocation>
        <location evidence="2">Cell membrane</location>
        <topology evidence="1">Multi-pass membrane protein</topology>
    </subcellularLocation>
</comment>
<comment type="similarity">
    <text evidence="2">Belongs to the binding-protein-dependent transport system permease family. MalFG subfamily.</text>
</comment>
<accession>O58760</accession>
<sequence>MKIRRYLVPNLIAWSIGIAWLIPFMGVLMASVRPYEEIVSGWWHLHPFTITLKNYINALNHPMFPIGEGLKNSLIVAIPSTIVPVIVASLAAYAFARYSFPIKHYLFAFIVLLMALPQQMTVVPLYFLLRNAHLLNTFRGLIIVHSAWGLAWIIFFMRNYFSMLPTDVEEAAKIDGATDFQIFYKIVLPMALPGLISASILQFTWVWSDFFLALVFLQNPEKYVATQRLPLLRGQYFVDWGLLTAASIMVMLVPLLVYALFQKYYISGMIGWSVEK</sequence>
<protein>
    <recommendedName>
        <fullName>Probable ABC transporter permease protein PH1036</fullName>
    </recommendedName>
</protein>
<proteinExistence type="inferred from homology"/>
<dbReference type="EMBL" id="BA000001">
    <property type="protein sequence ID" value="BAA30134.1"/>
    <property type="molecule type" value="Genomic_DNA"/>
</dbReference>
<dbReference type="PIR" id="H71096">
    <property type="entry name" value="H71096"/>
</dbReference>
<dbReference type="RefSeq" id="WP_010885124.1">
    <property type="nucleotide sequence ID" value="NC_000961.1"/>
</dbReference>
<dbReference type="SMR" id="O58760"/>
<dbReference type="STRING" id="70601.gene:9377994"/>
<dbReference type="EnsemblBacteria" id="BAA30134">
    <property type="protein sequence ID" value="BAA30134"/>
    <property type="gene ID" value="BAA30134"/>
</dbReference>
<dbReference type="GeneID" id="1443359"/>
<dbReference type="KEGG" id="pho:PH1036"/>
<dbReference type="eggNOG" id="arCOG00159">
    <property type="taxonomic scope" value="Archaea"/>
</dbReference>
<dbReference type="OrthoDB" id="97781at2157"/>
<dbReference type="Proteomes" id="UP000000752">
    <property type="component" value="Chromosome"/>
</dbReference>
<dbReference type="GO" id="GO:0005886">
    <property type="term" value="C:plasma membrane"/>
    <property type="evidence" value="ECO:0007669"/>
    <property type="project" value="UniProtKB-SubCell"/>
</dbReference>
<dbReference type="GO" id="GO:0055085">
    <property type="term" value="P:transmembrane transport"/>
    <property type="evidence" value="ECO:0007669"/>
    <property type="project" value="InterPro"/>
</dbReference>
<dbReference type="CDD" id="cd06261">
    <property type="entry name" value="TM_PBP2"/>
    <property type="match status" value="1"/>
</dbReference>
<dbReference type="Gene3D" id="1.10.3720.10">
    <property type="entry name" value="MetI-like"/>
    <property type="match status" value="1"/>
</dbReference>
<dbReference type="InterPro" id="IPR000515">
    <property type="entry name" value="MetI-like"/>
</dbReference>
<dbReference type="InterPro" id="IPR035906">
    <property type="entry name" value="MetI-like_sf"/>
</dbReference>
<dbReference type="PANTHER" id="PTHR43744">
    <property type="entry name" value="ABC TRANSPORTER PERMEASE PROTEIN MG189-RELATED-RELATED"/>
    <property type="match status" value="1"/>
</dbReference>
<dbReference type="PANTHER" id="PTHR43744:SF4">
    <property type="entry name" value="OSMOPROTECTIVE COMPOUNDS UPTAKE PERMEASE PROTEIN GGTD"/>
    <property type="match status" value="1"/>
</dbReference>
<dbReference type="Pfam" id="PF00528">
    <property type="entry name" value="BPD_transp_1"/>
    <property type="match status" value="1"/>
</dbReference>
<dbReference type="SUPFAM" id="SSF161098">
    <property type="entry name" value="MetI-like"/>
    <property type="match status" value="1"/>
</dbReference>
<dbReference type="PROSITE" id="PS50928">
    <property type="entry name" value="ABC_TM1"/>
    <property type="match status" value="1"/>
</dbReference>
<name>YJ16_PYRHO</name>